<keyword id="KW-0963">Cytoplasm</keyword>
<keyword id="KW-0378">Hydrolase</keyword>
<keyword id="KW-1185">Reference proteome</keyword>
<keyword id="KW-0694">RNA-binding</keyword>
<keyword id="KW-0820">tRNA-binding</keyword>
<dbReference type="EC" id="3.1.1.29" evidence="1"/>
<dbReference type="EMBL" id="CP000727">
    <property type="protein sequence ID" value="ABS38023.1"/>
    <property type="molecule type" value="Genomic_DNA"/>
</dbReference>
<dbReference type="EMBL" id="AM412317">
    <property type="protein sequence ID" value="CAL85100.1"/>
    <property type="molecule type" value="Genomic_DNA"/>
</dbReference>
<dbReference type="RefSeq" id="WP_012048384.1">
    <property type="nucleotide sequence ID" value="NC_009698.1"/>
</dbReference>
<dbReference type="RefSeq" id="YP_001256021.1">
    <property type="nucleotide sequence ID" value="NC_009495.1"/>
</dbReference>
<dbReference type="RefSeq" id="YP_001389262.1">
    <property type="nucleotide sequence ID" value="NC_009698.1"/>
</dbReference>
<dbReference type="SMR" id="A5I7R5"/>
<dbReference type="GeneID" id="5187794"/>
<dbReference type="KEGG" id="cbh:CLC_3518"/>
<dbReference type="KEGG" id="cbo:CBO3540"/>
<dbReference type="PATRIC" id="fig|413999.7.peg.3517"/>
<dbReference type="HOGENOM" id="CLU_062456_4_1_9"/>
<dbReference type="PRO" id="PR:A5I7R5"/>
<dbReference type="Proteomes" id="UP000001986">
    <property type="component" value="Chromosome"/>
</dbReference>
<dbReference type="GO" id="GO:0005737">
    <property type="term" value="C:cytoplasm"/>
    <property type="evidence" value="ECO:0007669"/>
    <property type="project" value="UniProtKB-SubCell"/>
</dbReference>
<dbReference type="GO" id="GO:0004045">
    <property type="term" value="F:peptidyl-tRNA hydrolase activity"/>
    <property type="evidence" value="ECO:0000318"/>
    <property type="project" value="GO_Central"/>
</dbReference>
<dbReference type="GO" id="GO:0000049">
    <property type="term" value="F:tRNA binding"/>
    <property type="evidence" value="ECO:0007669"/>
    <property type="project" value="UniProtKB-UniRule"/>
</dbReference>
<dbReference type="GO" id="GO:0006515">
    <property type="term" value="P:protein quality control for misfolded or incompletely synthesized proteins"/>
    <property type="evidence" value="ECO:0007669"/>
    <property type="project" value="UniProtKB-UniRule"/>
</dbReference>
<dbReference type="GO" id="GO:0072344">
    <property type="term" value="P:rescue of stalled ribosome"/>
    <property type="evidence" value="ECO:0007669"/>
    <property type="project" value="UniProtKB-UniRule"/>
</dbReference>
<dbReference type="CDD" id="cd00462">
    <property type="entry name" value="PTH"/>
    <property type="match status" value="1"/>
</dbReference>
<dbReference type="FunFam" id="3.40.50.1470:FF:000001">
    <property type="entry name" value="Peptidyl-tRNA hydrolase"/>
    <property type="match status" value="1"/>
</dbReference>
<dbReference type="Gene3D" id="3.40.50.1470">
    <property type="entry name" value="Peptidyl-tRNA hydrolase"/>
    <property type="match status" value="1"/>
</dbReference>
<dbReference type="HAMAP" id="MF_00083">
    <property type="entry name" value="Pept_tRNA_hydro_bact"/>
    <property type="match status" value="1"/>
</dbReference>
<dbReference type="InterPro" id="IPR001328">
    <property type="entry name" value="Pept_tRNA_hydro"/>
</dbReference>
<dbReference type="InterPro" id="IPR018171">
    <property type="entry name" value="Pept_tRNA_hydro_CS"/>
</dbReference>
<dbReference type="InterPro" id="IPR036416">
    <property type="entry name" value="Pept_tRNA_hydro_sf"/>
</dbReference>
<dbReference type="NCBIfam" id="TIGR00447">
    <property type="entry name" value="pth"/>
    <property type="match status" value="1"/>
</dbReference>
<dbReference type="PANTHER" id="PTHR17224">
    <property type="entry name" value="PEPTIDYL-TRNA HYDROLASE"/>
    <property type="match status" value="1"/>
</dbReference>
<dbReference type="PANTHER" id="PTHR17224:SF1">
    <property type="entry name" value="PEPTIDYL-TRNA HYDROLASE"/>
    <property type="match status" value="1"/>
</dbReference>
<dbReference type="Pfam" id="PF01195">
    <property type="entry name" value="Pept_tRNA_hydro"/>
    <property type="match status" value="1"/>
</dbReference>
<dbReference type="SUPFAM" id="SSF53178">
    <property type="entry name" value="Peptidyl-tRNA hydrolase-like"/>
    <property type="match status" value="1"/>
</dbReference>
<dbReference type="PROSITE" id="PS01195">
    <property type="entry name" value="PEPT_TRNA_HYDROL_1"/>
    <property type="match status" value="1"/>
</dbReference>
<dbReference type="PROSITE" id="PS01196">
    <property type="entry name" value="PEPT_TRNA_HYDROL_2"/>
    <property type="match status" value="1"/>
</dbReference>
<comment type="function">
    <text evidence="1">Hydrolyzes ribosome-free peptidyl-tRNAs (with 1 or more amino acids incorporated), which drop off the ribosome during protein synthesis, or as a result of ribosome stalling.</text>
</comment>
<comment type="function">
    <text evidence="1">Catalyzes the release of premature peptidyl moieties from peptidyl-tRNA molecules trapped in stalled 50S ribosomal subunits, and thus maintains levels of free tRNAs and 50S ribosomes.</text>
</comment>
<comment type="catalytic activity">
    <reaction evidence="1">
        <text>an N-acyl-L-alpha-aminoacyl-tRNA + H2O = an N-acyl-L-amino acid + a tRNA + H(+)</text>
        <dbReference type="Rhea" id="RHEA:54448"/>
        <dbReference type="Rhea" id="RHEA-COMP:10123"/>
        <dbReference type="Rhea" id="RHEA-COMP:13883"/>
        <dbReference type="ChEBI" id="CHEBI:15377"/>
        <dbReference type="ChEBI" id="CHEBI:15378"/>
        <dbReference type="ChEBI" id="CHEBI:59874"/>
        <dbReference type="ChEBI" id="CHEBI:78442"/>
        <dbReference type="ChEBI" id="CHEBI:138191"/>
        <dbReference type="EC" id="3.1.1.29"/>
    </reaction>
</comment>
<comment type="subunit">
    <text evidence="1">Monomer.</text>
</comment>
<comment type="subcellular location">
    <subcellularLocation>
        <location evidence="1">Cytoplasm</location>
    </subcellularLocation>
</comment>
<comment type="similarity">
    <text evidence="1">Belongs to the PTH family.</text>
</comment>
<organism>
    <name type="scientific">Clostridium botulinum (strain Hall / ATCC 3502 / NCTC 13319 / Type A)</name>
    <dbReference type="NCBI Taxonomy" id="441771"/>
    <lineage>
        <taxon>Bacteria</taxon>
        <taxon>Bacillati</taxon>
        <taxon>Bacillota</taxon>
        <taxon>Clostridia</taxon>
        <taxon>Eubacteriales</taxon>
        <taxon>Clostridiaceae</taxon>
        <taxon>Clostridium</taxon>
    </lineage>
</organism>
<evidence type="ECO:0000255" key="1">
    <source>
        <dbReference type="HAMAP-Rule" id="MF_00083"/>
    </source>
</evidence>
<gene>
    <name evidence="1" type="primary">pth</name>
    <name type="ordered locus">CBO3540</name>
    <name type="ordered locus">CLC_3518</name>
</gene>
<feature type="chain" id="PRO_1000010584" description="Peptidyl-tRNA hydrolase">
    <location>
        <begin position="1"/>
        <end position="189"/>
    </location>
</feature>
<feature type="active site" description="Proton acceptor" evidence="1">
    <location>
        <position position="19"/>
    </location>
</feature>
<feature type="binding site" evidence="1">
    <location>
        <position position="14"/>
    </location>
    <ligand>
        <name>tRNA</name>
        <dbReference type="ChEBI" id="CHEBI:17843"/>
    </ligand>
</feature>
<feature type="binding site" evidence="1">
    <location>
        <position position="64"/>
    </location>
    <ligand>
        <name>tRNA</name>
        <dbReference type="ChEBI" id="CHEBI:17843"/>
    </ligand>
</feature>
<feature type="binding site" evidence="1">
    <location>
        <position position="66"/>
    </location>
    <ligand>
        <name>tRNA</name>
        <dbReference type="ChEBI" id="CHEBI:17843"/>
    </ligand>
</feature>
<feature type="binding site" evidence="1">
    <location>
        <position position="112"/>
    </location>
    <ligand>
        <name>tRNA</name>
        <dbReference type="ChEBI" id="CHEBI:17843"/>
    </ligand>
</feature>
<feature type="site" description="Discriminates between blocked and unblocked aminoacyl-tRNA" evidence="1">
    <location>
        <position position="9"/>
    </location>
</feature>
<feature type="site" description="Stabilizes the basic form of H active site to accept a proton" evidence="1">
    <location>
        <position position="91"/>
    </location>
</feature>
<protein>
    <recommendedName>
        <fullName evidence="1">Peptidyl-tRNA hydrolase</fullName>
        <shortName evidence="1">Pth</shortName>
        <ecNumber evidence="1">3.1.1.29</ecNumber>
    </recommendedName>
</protein>
<reference key="1">
    <citation type="journal article" date="2007" name="Genome Res.">
        <title>Genome sequence of a proteolytic (Group I) Clostridium botulinum strain Hall A and comparative analysis of the clostridial genomes.</title>
        <authorList>
            <person name="Sebaihia M."/>
            <person name="Peck M.W."/>
            <person name="Minton N.P."/>
            <person name="Thomson N.R."/>
            <person name="Holden M.T.G."/>
            <person name="Mitchell W.J."/>
            <person name="Carter A.T."/>
            <person name="Bentley S.D."/>
            <person name="Mason D.R."/>
            <person name="Crossman L."/>
            <person name="Paul C.J."/>
            <person name="Ivens A."/>
            <person name="Wells-Bennik M.H.J."/>
            <person name="Davis I.J."/>
            <person name="Cerdeno-Tarraga A.M."/>
            <person name="Churcher C."/>
            <person name="Quail M.A."/>
            <person name="Chillingworth T."/>
            <person name="Feltwell T."/>
            <person name="Fraser A."/>
            <person name="Goodhead I."/>
            <person name="Hance Z."/>
            <person name="Jagels K."/>
            <person name="Larke N."/>
            <person name="Maddison M."/>
            <person name="Moule S."/>
            <person name="Mungall K."/>
            <person name="Norbertczak H."/>
            <person name="Rabbinowitsch E."/>
            <person name="Sanders M."/>
            <person name="Simmonds M."/>
            <person name="White B."/>
            <person name="Whithead S."/>
            <person name="Parkhill J."/>
        </authorList>
    </citation>
    <scope>NUCLEOTIDE SEQUENCE [LARGE SCALE GENOMIC DNA]</scope>
    <source>
        <strain>Hall / ATCC 3502 / NCTC 13319 / Type A</strain>
    </source>
</reference>
<reference key="2">
    <citation type="journal article" date="2007" name="PLoS ONE">
        <title>Analysis of the neurotoxin complex genes in Clostridium botulinum A1-A4 and B1 strains: BoNT/A3, /Ba4 and /B1 clusters are located within plasmids.</title>
        <authorList>
            <person name="Smith T.J."/>
            <person name="Hill K.K."/>
            <person name="Foley B.T."/>
            <person name="Detter J.C."/>
            <person name="Munk A.C."/>
            <person name="Bruce D.C."/>
            <person name="Doggett N.A."/>
            <person name="Smith L.A."/>
            <person name="Marks J.D."/>
            <person name="Xie G."/>
            <person name="Brettin T.S."/>
        </authorList>
    </citation>
    <scope>NUCLEOTIDE SEQUENCE [LARGE SCALE GENOMIC DNA]</scope>
    <source>
        <strain>Hall / ATCC 3502 / NCTC 13319 / Type A</strain>
    </source>
</reference>
<accession>A5I7R5</accession>
<accession>A7G8Z7</accession>
<name>PTH_CLOBH</name>
<proteinExistence type="inferred from homology"/>
<sequence>MYLVVGLGNIGKEYKKTRHNIGFDVVDIIAEKYNIEINRQKFKGSYGEGRIGNEKIILLKPSTYMNLSGESVIEAANFYKIDKENIIVIYDDMSIDIGKLRVRSKGSAGGHNGIKNIIQHLNSDIFPRVRVGIGQPDENVVNYVLGKFSKDEREIIEKVLAMSAKACISIVEDGVTEAMNKYNGVKIEV</sequence>